<evidence type="ECO:0000255" key="1">
    <source>
        <dbReference type="HAMAP-Rule" id="MF_00344"/>
    </source>
</evidence>
<proteinExistence type="inferred from homology"/>
<feature type="chain" id="PRO_1000120321" description="GMP synthase [glutamine-hydrolyzing]">
    <location>
        <begin position="1"/>
        <end position="539"/>
    </location>
</feature>
<feature type="domain" description="Glutamine amidotransferase type-1" evidence="1">
    <location>
        <begin position="4"/>
        <end position="203"/>
    </location>
</feature>
<feature type="domain" description="GMPS ATP-PPase" evidence="1">
    <location>
        <begin position="204"/>
        <end position="395"/>
    </location>
</feature>
<feature type="active site" description="Nucleophile" evidence="1">
    <location>
        <position position="82"/>
    </location>
</feature>
<feature type="active site" evidence="1">
    <location>
        <position position="177"/>
    </location>
</feature>
<feature type="active site" evidence="1">
    <location>
        <position position="179"/>
    </location>
</feature>
<feature type="binding site" evidence="1">
    <location>
        <begin position="231"/>
        <end position="237"/>
    </location>
    <ligand>
        <name>ATP</name>
        <dbReference type="ChEBI" id="CHEBI:30616"/>
    </ligand>
</feature>
<accession>A6SZM5</accession>
<name>GUAA_JANMA</name>
<reference key="1">
    <citation type="journal article" date="2007" name="PLoS Genet.">
        <title>Genome analysis of Minibacterium massiliensis highlights the convergent evolution of water-living bacteria.</title>
        <authorList>
            <person name="Audic S."/>
            <person name="Robert C."/>
            <person name="Campagna B."/>
            <person name="Parinello H."/>
            <person name="Claverie J.-M."/>
            <person name="Raoult D."/>
            <person name="Drancourt M."/>
        </authorList>
    </citation>
    <scope>NUCLEOTIDE SEQUENCE [LARGE SCALE GENOMIC DNA]</scope>
    <source>
        <strain>Marseille</strain>
    </source>
</reference>
<keyword id="KW-0067">ATP-binding</keyword>
<keyword id="KW-0315">Glutamine amidotransferase</keyword>
<keyword id="KW-0332">GMP biosynthesis</keyword>
<keyword id="KW-0436">Ligase</keyword>
<keyword id="KW-0547">Nucleotide-binding</keyword>
<keyword id="KW-0658">Purine biosynthesis</keyword>
<dbReference type="EC" id="6.3.5.2" evidence="1"/>
<dbReference type="EMBL" id="CP000269">
    <property type="protein sequence ID" value="ABR88607.1"/>
    <property type="molecule type" value="Genomic_DNA"/>
</dbReference>
<dbReference type="RefSeq" id="WP_012079885.1">
    <property type="nucleotide sequence ID" value="NC_009659.1"/>
</dbReference>
<dbReference type="SMR" id="A6SZM5"/>
<dbReference type="STRING" id="375286.mma_2032"/>
<dbReference type="MEROPS" id="C26.957"/>
<dbReference type="KEGG" id="mms:mma_2032"/>
<dbReference type="eggNOG" id="COG0518">
    <property type="taxonomic scope" value="Bacteria"/>
</dbReference>
<dbReference type="eggNOG" id="COG0519">
    <property type="taxonomic scope" value="Bacteria"/>
</dbReference>
<dbReference type="HOGENOM" id="CLU_014340_0_5_4"/>
<dbReference type="OrthoDB" id="9802219at2"/>
<dbReference type="UniPathway" id="UPA00189">
    <property type="reaction ID" value="UER00296"/>
</dbReference>
<dbReference type="Proteomes" id="UP000006388">
    <property type="component" value="Chromosome"/>
</dbReference>
<dbReference type="GO" id="GO:0005829">
    <property type="term" value="C:cytosol"/>
    <property type="evidence" value="ECO:0007669"/>
    <property type="project" value="TreeGrafter"/>
</dbReference>
<dbReference type="GO" id="GO:0005524">
    <property type="term" value="F:ATP binding"/>
    <property type="evidence" value="ECO:0007669"/>
    <property type="project" value="UniProtKB-UniRule"/>
</dbReference>
<dbReference type="GO" id="GO:0003921">
    <property type="term" value="F:GMP synthase activity"/>
    <property type="evidence" value="ECO:0007669"/>
    <property type="project" value="InterPro"/>
</dbReference>
<dbReference type="CDD" id="cd01742">
    <property type="entry name" value="GATase1_GMP_Synthase"/>
    <property type="match status" value="1"/>
</dbReference>
<dbReference type="CDD" id="cd01997">
    <property type="entry name" value="GMP_synthase_C"/>
    <property type="match status" value="1"/>
</dbReference>
<dbReference type="FunFam" id="3.30.300.10:FF:000002">
    <property type="entry name" value="GMP synthase [glutamine-hydrolyzing]"/>
    <property type="match status" value="1"/>
</dbReference>
<dbReference type="FunFam" id="3.40.50.620:FF:000001">
    <property type="entry name" value="GMP synthase [glutamine-hydrolyzing]"/>
    <property type="match status" value="1"/>
</dbReference>
<dbReference type="FunFam" id="3.40.50.880:FF:000001">
    <property type="entry name" value="GMP synthase [glutamine-hydrolyzing]"/>
    <property type="match status" value="1"/>
</dbReference>
<dbReference type="Gene3D" id="3.30.300.10">
    <property type="match status" value="1"/>
</dbReference>
<dbReference type="Gene3D" id="3.40.50.880">
    <property type="match status" value="1"/>
</dbReference>
<dbReference type="Gene3D" id="3.40.50.620">
    <property type="entry name" value="HUPs"/>
    <property type="match status" value="1"/>
</dbReference>
<dbReference type="HAMAP" id="MF_00344">
    <property type="entry name" value="GMP_synthase"/>
    <property type="match status" value="1"/>
</dbReference>
<dbReference type="InterPro" id="IPR029062">
    <property type="entry name" value="Class_I_gatase-like"/>
</dbReference>
<dbReference type="InterPro" id="IPR017926">
    <property type="entry name" value="GATASE"/>
</dbReference>
<dbReference type="InterPro" id="IPR001674">
    <property type="entry name" value="GMP_synth_C"/>
</dbReference>
<dbReference type="InterPro" id="IPR004739">
    <property type="entry name" value="GMP_synth_GATase"/>
</dbReference>
<dbReference type="InterPro" id="IPR022955">
    <property type="entry name" value="GMP_synthase"/>
</dbReference>
<dbReference type="InterPro" id="IPR025777">
    <property type="entry name" value="GMPS_ATP_PPase_dom"/>
</dbReference>
<dbReference type="InterPro" id="IPR022310">
    <property type="entry name" value="NAD/GMP_synthase"/>
</dbReference>
<dbReference type="InterPro" id="IPR014729">
    <property type="entry name" value="Rossmann-like_a/b/a_fold"/>
</dbReference>
<dbReference type="NCBIfam" id="TIGR00884">
    <property type="entry name" value="guaA_Cterm"/>
    <property type="match status" value="1"/>
</dbReference>
<dbReference type="NCBIfam" id="TIGR00888">
    <property type="entry name" value="guaA_Nterm"/>
    <property type="match status" value="1"/>
</dbReference>
<dbReference type="NCBIfam" id="NF000848">
    <property type="entry name" value="PRK00074.1"/>
    <property type="match status" value="1"/>
</dbReference>
<dbReference type="PANTHER" id="PTHR11922:SF2">
    <property type="entry name" value="GMP SYNTHASE [GLUTAMINE-HYDROLYZING]"/>
    <property type="match status" value="1"/>
</dbReference>
<dbReference type="PANTHER" id="PTHR11922">
    <property type="entry name" value="GMP SYNTHASE-RELATED"/>
    <property type="match status" value="1"/>
</dbReference>
<dbReference type="Pfam" id="PF00117">
    <property type="entry name" value="GATase"/>
    <property type="match status" value="1"/>
</dbReference>
<dbReference type="Pfam" id="PF00958">
    <property type="entry name" value="GMP_synt_C"/>
    <property type="match status" value="1"/>
</dbReference>
<dbReference type="Pfam" id="PF02540">
    <property type="entry name" value="NAD_synthase"/>
    <property type="match status" value="1"/>
</dbReference>
<dbReference type="PRINTS" id="PR00097">
    <property type="entry name" value="ANTSNTHASEII"/>
</dbReference>
<dbReference type="PRINTS" id="PR00096">
    <property type="entry name" value="GATASE"/>
</dbReference>
<dbReference type="SUPFAM" id="SSF52402">
    <property type="entry name" value="Adenine nucleotide alpha hydrolases-like"/>
    <property type="match status" value="1"/>
</dbReference>
<dbReference type="SUPFAM" id="SSF52317">
    <property type="entry name" value="Class I glutamine amidotransferase-like"/>
    <property type="match status" value="1"/>
</dbReference>
<dbReference type="SUPFAM" id="SSF54810">
    <property type="entry name" value="GMP synthetase C-terminal dimerisation domain"/>
    <property type="match status" value="1"/>
</dbReference>
<dbReference type="PROSITE" id="PS51273">
    <property type="entry name" value="GATASE_TYPE_1"/>
    <property type="match status" value="1"/>
</dbReference>
<dbReference type="PROSITE" id="PS51553">
    <property type="entry name" value="GMPS_ATP_PPASE"/>
    <property type="match status" value="1"/>
</dbReference>
<comment type="function">
    <text evidence="1">Catalyzes the synthesis of GMP from XMP.</text>
</comment>
<comment type="catalytic activity">
    <reaction evidence="1">
        <text>XMP + L-glutamine + ATP + H2O = GMP + L-glutamate + AMP + diphosphate + 2 H(+)</text>
        <dbReference type="Rhea" id="RHEA:11680"/>
        <dbReference type="ChEBI" id="CHEBI:15377"/>
        <dbReference type="ChEBI" id="CHEBI:15378"/>
        <dbReference type="ChEBI" id="CHEBI:29985"/>
        <dbReference type="ChEBI" id="CHEBI:30616"/>
        <dbReference type="ChEBI" id="CHEBI:33019"/>
        <dbReference type="ChEBI" id="CHEBI:57464"/>
        <dbReference type="ChEBI" id="CHEBI:58115"/>
        <dbReference type="ChEBI" id="CHEBI:58359"/>
        <dbReference type="ChEBI" id="CHEBI:456215"/>
        <dbReference type="EC" id="6.3.5.2"/>
    </reaction>
</comment>
<comment type="pathway">
    <text evidence="1">Purine metabolism; GMP biosynthesis; GMP from XMP (L-Gln route): step 1/1.</text>
</comment>
<comment type="subunit">
    <text evidence="1">Homodimer.</text>
</comment>
<sequence>MHSKILILDFGSQVTQLIARRVRDSGVFSEVFPYDVSDEFVRNYGAAGVILSGGPNSVIEGDESPRVPQAVFELGVPVMGICYGMQAMAEQLGGKVENGKVREFGYAEVRAHGHTALLKDISDFTTPEGHGMLKVWMSHGDKVNEMPPGFKLMASTPNCPIAGMADEERRMYAFQFHPEVTHTVQGKAIIARFVHDICGCKSDWNMPDYIAEAVEKIRQQVGSDEVILGLSGGVDSSVAAALIHRAIGDQLTCVFVDHGLLRLDEGKMVMEMFAESLGVNVIHIDAVDQFMGHLAGVSDPEAKRKIIGREFVEVFQVEAGKRKNAKWLAQGTIYPDVIESAGKGKKGHTIKSHHNVGGLPETLNLQLLEPLRELFKDEVRKLGVALGLPHDMVYRHPFPGPGLGVRILGEVKKEFADLLRRADAIFIEELRKTPFVATPGASEATDNGIPHRNWYDATSQAFAVFLPVKSVGVMGDGRTYEYVVALRAVQTQDFMTAHWAHLPHELLGNVSNRIINEVRGINRVVYDISGKPPATIEWE</sequence>
<protein>
    <recommendedName>
        <fullName evidence="1">GMP synthase [glutamine-hydrolyzing]</fullName>
        <ecNumber evidence="1">6.3.5.2</ecNumber>
    </recommendedName>
    <alternativeName>
        <fullName evidence="1">GMP synthetase</fullName>
    </alternativeName>
    <alternativeName>
        <fullName evidence="1">Glutamine amidotransferase</fullName>
    </alternativeName>
</protein>
<gene>
    <name evidence="1" type="primary">guaA</name>
    <name type="ordered locus">mma_2032</name>
</gene>
<organism>
    <name type="scientific">Janthinobacterium sp. (strain Marseille)</name>
    <name type="common">Minibacterium massiliensis</name>
    <dbReference type="NCBI Taxonomy" id="375286"/>
    <lineage>
        <taxon>Bacteria</taxon>
        <taxon>Pseudomonadati</taxon>
        <taxon>Pseudomonadota</taxon>
        <taxon>Betaproteobacteria</taxon>
        <taxon>Burkholderiales</taxon>
        <taxon>Oxalobacteraceae</taxon>
        <taxon>Janthinobacterium</taxon>
    </lineage>
</organism>